<reference key="1">
    <citation type="journal article" date="1996" name="Nucleic Acids Res.">
        <title>Complete sequence analysis of the genome of the bacterium Mycoplasma pneumoniae.</title>
        <authorList>
            <person name="Himmelreich R."/>
            <person name="Hilbert H."/>
            <person name="Plagens H."/>
            <person name="Pirkl E."/>
            <person name="Li B.-C."/>
            <person name="Herrmann R."/>
        </authorList>
    </citation>
    <scope>NUCLEOTIDE SEQUENCE [LARGE SCALE GENOMIC DNA]</scope>
    <source>
        <strain>ATCC 29342 / M129 / Subtype 1</strain>
    </source>
</reference>
<reference key="2">
    <citation type="journal article" date="2000" name="Electrophoresis">
        <title>Towards a two-dimensional proteome map of Mycoplasma pneumoniae.</title>
        <authorList>
            <person name="Regula J.T."/>
            <person name="Ueberle B."/>
            <person name="Boguth G."/>
            <person name="Goerg A."/>
            <person name="Schnoelzer M."/>
            <person name="Herrmann R."/>
            <person name="Frank R."/>
        </authorList>
    </citation>
    <scope>IDENTIFICATION BY MASS SPECTROMETRY</scope>
    <source>
        <strain>ATCC 29342 / M129 / Subtype 1</strain>
    </source>
</reference>
<evidence type="ECO:0000256" key="1">
    <source>
        <dbReference type="SAM" id="MobiDB-lite"/>
    </source>
</evidence>
<evidence type="ECO:0000305" key="2"/>
<evidence type="ECO:0007829" key="3">
    <source>
        <dbReference type="PDB" id="7OOD"/>
    </source>
</evidence>
<evidence type="ECO:0007829" key="4">
    <source>
        <dbReference type="PDB" id="8P8B"/>
    </source>
</evidence>
<name>RL35_MYCPN</name>
<protein>
    <recommendedName>
        <fullName evidence="2">Large ribosomal subunit protein bL35</fullName>
    </recommendedName>
    <alternativeName>
        <fullName>50S ribosomal protein L35</fullName>
    </alternativeName>
</protein>
<sequence length="59" mass="6771">MKVKSAAKKRFKLTKSGQIKRKHAYTSHLAPHKTTKQKRHLRKQGTVSASDFKRIGNLI</sequence>
<organism>
    <name type="scientific">Mycoplasma pneumoniae (strain ATCC 29342 / M129 / Subtype 1)</name>
    <name type="common">Mycoplasmoides pneumoniae</name>
    <dbReference type="NCBI Taxonomy" id="272634"/>
    <lineage>
        <taxon>Bacteria</taxon>
        <taxon>Bacillati</taxon>
        <taxon>Mycoplasmatota</taxon>
        <taxon>Mycoplasmoidales</taxon>
        <taxon>Mycoplasmoidaceae</taxon>
        <taxon>Mycoplasmoides</taxon>
    </lineage>
</organism>
<keyword id="KW-0002">3D-structure</keyword>
<keyword id="KW-1185">Reference proteome</keyword>
<keyword id="KW-0687">Ribonucleoprotein</keyword>
<keyword id="KW-0689">Ribosomal protein</keyword>
<proteinExistence type="evidence at protein level"/>
<feature type="chain" id="PRO_0000177384" description="Large ribosomal subunit protein bL35">
    <location>
        <begin position="1"/>
        <end position="59"/>
    </location>
</feature>
<feature type="region of interest" description="Disordered" evidence="1">
    <location>
        <begin position="1"/>
        <end position="22"/>
    </location>
</feature>
<feature type="region of interest" description="Disordered" evidence="1">
    <location>
        <begin position="30"/>
        <end position="49"/>
    </location>
</feature>
<feature type="compositionally biased region" description="Basic residues" evidence="1">
    <location>
        <begin position="30"/>
        <end position="43"/>
    </location>
</feature>
<feature type="turn" evidence="4">
    <location>
        <begin position="5"/>
        <end position="10"/>
    </location>
</feature>
<feature type="strand" evidence="3">
    <location>
        <begin position="15"/>
        <end position="17"/>
    </location>
</feature>
<feature type="strand" evidence="4">
    <location>
        <begin position="19"/>
        <end position="21"/>
    </location>
</feature>
<feature type="helix" evidence="4">
    <location>
        <begin position="30"/>
        <end position="32"/>
    </location>
</feature>
<feature type="helix" evidence="4">
    <location>
        <begin position="35"/>
        <end position="42"/>
    </location>
</feature>
<feature type="helix" evidence="4">
    <location>
        <begin position="49"/>
        <end position="56"/>
    </location>
</feature>
<comment type="similarity">
    <text evidence="2">Belongs to the bacterial ribosomal protein bL35 family.</text>
</comment>
<dbReference type="EMBL" id="U00089">
    <property type="protein sequence ID" value="AAG34733.1"/>
    <property type="molecule type" value="Genomic_DNA"/>
</dbReference>
<dbReference type="PIR" id="S73364">
    <property type="entry name" value="S73364"/>
</dbReference>
<dbReference type="RefSeq" id="NP_109804.1">
    <property type="nucleotide sequence ID" value="NC_000912.1"/>
</dbReference>
<dbReference type="RefSeq" id="WP_010874473.1">
    <property type="nucleotide sequence ID" value="NZ_OU342337.1"/>
</dbReference>
<dbReference type="PDB" id="7OOD">
    <property type="method" value="EM"/>
    <property type="resolution" value="3.40 A"/>
    <property type="chains" value="1=1-59"/>
</dbReference>
<dbReference type="PDB" id="7P6Z">
    <property type="method" value="EM"/>
    <property type="resolution" value="3.50 A"/>
    <property type="chains" value="1=1-59"/>
</dbReference>
<dbReference type="PDB" id="7PAH">
    <property type="method" value="EM"/>
    <property type="resolution" value="9.50 A"/>
    <property type="chains" value="1=1-59"/>
</dbReference>
<dbReference type="PDB" id="7PAI">
    <property type="method" value="EM"/>
    <property type="resolution" value="6.70 A"/>
    <property type="chains" value="1=1-59"/>
</dbReference>
<dbReference type="PDB" id="7PAJ">
    <property type="method" value="EM"/>
    <property type="resolution" value="7.30 A"/>
    <property type="chains" value="1=1-59"/>
</dbReference>
<dbReference type="PDB" id="7PAK">
    <property type="method" value="EM"/>
    <property type="resolution" value="5.30 A"/>
    <property type="chains" value="1=1-59"/>
</dbReference>
<dbReference type="PDB" id="7PAL">
    <property type="method" value="EM"/>
    <property type="resolution" value="4.70 A"/>
    <property type="chains" value="1=1-59"/>
</dbReference>
<dbReference type="PDB" id="7PAM">
    <property type="method" value="EM"/>
    <property type="resolution" value="6.80 A"/>
    <property type="chains" value="1=1-59"/>
</dbReference>
<dbReference type="PDB" id="7PAN">
    <property type="method" value="EM"/>
    <property type="resolution" value="9.70 A"/>
    <property type="chains" value="1=1-59"/>
</dbReference>
<dbReference type="PDB" id="7PAO">
    <property type="method" value="EM"/>
    <property type="resolution" value="7.00 A"/>
    <property type="chains" value="1=1-59"/>
</dbReference>
<dbReference type="PDB" id="7PAQ">
    <property type="method" value="EM"/>
    <property type="resolution" value="8.90 A"/>
    <property type="chains" value="1=1-59"/>
</dbReference>
<dbReference type="PDB" id="7PAR">
    <property type="method" value="EM"/>
    <property type="resolution" value="8.20 A"/>
    <property type="chains" value="1=1-59"/>
</dbReference>
<dbReference type="PDB" id="7PAS">
    <property type="method" value="EM"/>
    <property type="resolution" value="16.00 A"/>
    <property type="chains" value="1=1-59"/>
</dbReference>
<dbReference type="PDB" id="7PAT">
    <property type="method" value="EM"/>
    <property type="resolution" value="9.20 A"/>
    <property type="chains" value="1=1-59"/>
</dbReference>
<dbReference type="PDB" id="7PAU">
    <property type="method" value="EM"/>
    <property type="resolution" value="8.30 A"/>
    <property type="chains" value="1=1-59"/>
</dbReference>
<dbReference type="PDB" id="7PH9">
    <property type="method" value="EM"/>
    <property type="resolution" value="8.70 A"/>
    <property type="chains" value="1=1-59"/>
</dbReference>
<dbReference type="PDB" id="7PHA">
    <property type="method" value="EM"/>
    <property type="resolution" value="8.50 A"/>
    <property type="chains" value="1=1-59"/>
</dbReference>
<dbReference type="PDB" id="7PHB">
    <property type="method" value="EM"/>
    <property type="resolution" value="4.90 A"/>
    <property type="chains" value="1=1-59"/>
</dbReference>
<dbReference type="PDB" id="7PHC">
    <property type="method" value="EM"/>
    <property type="resolution" value="9.90 A"/>
    <property type="chains" value="1=1-59"/>
</dbReference>
<dbReference type="PDB" id="7PI8">
    <property type="method" value="EM"/>
    <property type="resolution" value="8.90 A"/>
    <property type="chains" value="1=1-59"/>
</dbReference>
<dbReference type="PDB" id="7PI9">
    <property type="method" value="EM"/>
    <property type="resolution" value="6.30 A"/>
    <property type="chains" value="1=1-59"/>
</dbReference>
<dbReference type="PDB" id="7PIA">
    <property type="method" value="EM"/>
    <property type="resolution" value="13.60 A"/>
    <property type="chains" value="1=1-59"/>
</dbReference>
<dbReference type="PDB" id="7PIB">
    <property type="method" value="EM"/>
    <property type="resolution" value="4.70 A"/>
    <property type="chains" value="1=1-59"/>
</dbReference>
<dbReference type="PDB" id="7PIC">
    <property type="method" value="EM"/>
    <property type="resolution" value="9.10 A"/>
    <property type="chains" value="1=1-59"/>
</dbReference>
<dbReference type="PDB" id="7PIO">
    <property type="method" value="EM"/>
    <property type="resolution" value="9.50 A"/>
    <property type="chains" value="1=1-59"/>
</dbReference>
<dbReference type="PDB" id="7PIP">
    <property type="method" value="EM"/>
    <property type="resolution" value="9.30 A"/>
    <property type="chains" value="1=1-59"/>
</dbReference>
<dbReference type="PDB" id="7PIQ">
    <property type="method" value="EM"/>
    <property type="resolution" value="9.70 A"/>
    <property type="chains" value="1=1-59"/>
</dbReference>
<dbReference type="PDB" id="7PIR">
    <property type="method" value="EM"/>
    <property type="resolution" value="12.10 A"/>
    <property type="chains" value="1=1-59"/>
</dbReference>
<dbReference type="PDB" id="7PIS">
    <property type="method" value="EM"/>
    <property type="resolution" value="15.00 A"/>
    <property type="chains" value="1=1-59"/>
</dbReference>
<dbReference type="PDB" id="7PIT">
    <property type="method" value="EM"/>
    <property type="resolution" value="5.70 A"/>
    <property type="chains" value="1=1-59"/>
</dbReference>
<dbReference type="PDB" id="8P7X">
    <property type="method" value="EM"/>
    <property type="resolution" value="3.03 A"/>
    <property type="chains" value="1=1-59"/>
</dbReference>
<dbReference type="PDB" id="8P7Y">
    <property type="method" value="EM"/>
    <property type="resolution" value="3.70 A"/>
    <property type="chains" value="1=1-59"/>
</dbReference>
<dbReference type="PDB" id="8P8B">
    <property type="method" value="EM"/>
    <property type="resolution" value="2.90 A"/>
    <property type="chains" value="1=1-59"/>
</dbReference>
<dbReference type="PDB" id="8P8V">
    <property type="method" value="EM"/>
    <property type="resolution" value="8.70 A"/>
    <property type="chains" value="1=1-59"/>
</dbReference>
<dbReference type="PDB" id="8P8W">
    <property type="method" value="EM"/>
    <property type="resolution" value="8.70 A"/>
    <property type="chains" value="1=1-59"/>
</dbReference>
<dbReference type="PDBsum" id="7OOD"/>
<dbReference type="PDBsum" id="7P6Z"/>
<dbReference type="PDBsum" id="7PAH"/>
<dbReference type="PDBsum" id="7PAI"/>
<dbReference type="PDBsum" id="7PAJ"/>
<dbReference type="PDBsum" id="7PAK"/>
<dbReference type="PDBsum" id="7PAL"/>
<dbReference type="PDBsum" id="7PAM"/>
<dbReference type="PDBsum" id="7PAN"/>
<dbReference type="PDBsum" id="7PAO"/>
<dbReference type="PDBsum" id="7PAQ"/>
<dbReference type="PDBsum" id="7PAR"/>
<dbReference type="PDBsum" id="7PAS"/>
<dbReference type="PDBsum" id="7PAT"/>
<dbReference type="PDBsum" id="7PAU"/>
<dbReference type="PDBsum" id="7PH9"/>
<dbReference type="PDBsum" id="7PHA"/>
<dbReference type="PDBsum" id="7PHB"/>
<dbReference type="PDBsum" id="7PHC"/>
<dbReference type="PDBsum" id="7PI8"/>
<dbReference type="PDBsum" id="7PI9"/>
<dbReference type="PDBsum" id="7PIA"/>
<dbReference type="PDBsum" id="7PIB"/>
<dbReference type="PDBsum" id="7PIC"/>
<dbReference type="PDBsum" id="7PIO"/>
<dbReference type="PDBsum" id="7PIP"/>
<dbReference type="PDBsum" id="7PIQ"/>
<dbReference type="PDBsum" id="7PIR"/>
<dbReference type="PDBsum" id="7PIS"/>
<dbReference type="PDBsum" id="7PIT"/>
<dbReference type="PDBsum" id="8P7X"/>
<dbReference type="PDBsum" id="8P7Y"/>
<dbReference type="PDBsum" id="8P8B"/>
<dbReference type="PDBsum" id="8P8V"/>
<dbReference type="PDBsum" id="8P8W"/>
<dbReference type="EMDB" id="EMD-13234"/>
<dbReference type="EMDB" id="EMD-13272"/>
<dbReference type="EMDB" id="EMD-13273"/>
<dbReference type="EMDB" id="EMD-13274"/>
<dbReference type="EMDB" id="EMD-13275"/>
<dbReference type="EMDB" id="EMD-13276"/>
<dbReference type="EMDB" id="EMD-13277"/>
<dbReference type="EMDB" id="EMD-13278"/>
<dbReference type="EMDB" id="EMD-13279"/>
<dbReference type="EMDB" id="EMD-13280"/>
<dbReference type="EMDB" id="EMD-13281"/>
<dbReference type="EMDB" id="EMD-13282"/>
<dbReference type="EMDB" id="EMD-13285"/>
<dbReference type="EMDB" id="EMD-13286"/>
<dbReference type="EMDB" id="EMD-13410"/>
<dbReference type="EMDB" id="EMD-13411"/>
<dbReference type="EMDB" id="EMD-13412"/>
<dbReference type="EMDB" id="EMD-13413"/>
<dbReference type="EMDB" id="EMD-13432"/>
<dbReference type="EMDB" id="EMD-13433"/>
<dbReference type="EMDB" id="EMD-13434"/>
<dbReference type="EMDB" id="EMD-13435"/>
<dbReference type="EMDB" id="EMD-13436"/>
<dbReference type="EMDB" id="EMD-13445"/>
<dbReference type="EMDB" id="EMD-13446"/>
<dbReference type="EMDB" id="EMD-13447"/>
<dbReference type="EMDB" id="EMD-13448"/>
<dbReference type="EMDB" id="EMD-13449"/>
<dbReference type="EMDB" id="EMD-13450"/>
<dbReference type="SMR" id="P75447"/>
<dbReference type="IntAct" id="P75447">
    <property type="interactions" value="1"/>
</dbReference>
<dbReference type="STRING" id="272634.MPN_116"/>
<dbReference type="EnsemblBacteria" id="AAG34733">
    <property type="protein sequence ID" value="AAG34733"/>
    <property type="gene ID" value="MPN_116"/>
</dbReference>
<dbReference type="GeneID" id="66609235"/>
<dbReference type="KEGG" id="mpn:MPN_116"/>
<dbReference type="PATRIC" id="fig|272634.6.peg.123"/>
<dbReference type="HOGENOM" id="CLU_169643_3_0_14"/>
<dbReference type="OrthoDB" id="47476at2"/>
<dbReference type="BioCyc" id="MPNE272634:G1GJ3-195-MONOMER"/>
<dbReference type="Proteomes" id="UP000000808">
    <property type="component" value="Chromosome"/>
</dbReference>
<dbReference type="GO" id="GO:0022625">
    <property type="term" value="C:cytosolic large ribosomal subunit"/>
    <property type="evidence" value="ECO:0007669"/>
    <property type="project" value="TreeGrafter"/>
</dbReference>
<dbReference type="GO" id="GO:0003735">
    <property type="term" value="F:structural constituent of ribosome"/>
    <property type="evidence" value="ECO:0007669"/>
    <property type="project" value="InterPro"/>
</dbReference>
<dbReference type="GO" id="GO:0006412">
    <property type="term" value="P:translation"/>
    <property type="evidence" value="ECO:0007669"/>
    <property type="project" value="UniProtKB-UniRule"/>
</dbReference>
<dbReference type="FunFam" id="4.10.410.60:FF:000001">
    <property type="entry name" value="50S ribosomal protein L35"/>
    <property type="match status" value="1"/>
</dbReference>
<dbReference type="Gene3D" id="4.10.410.60">
    <property type="match status" value="1"/>
</dbReference>
<dbReference type="HAMAP" id="MF_00514">
    <property type="entry name" value="Ribosomal_bL35"/>
    <property type="match status" value="1"/>
</dbReference>
<dbReference type="InterPro" id="IPR001706">
    <property type="entry name" value="Ribosomal_bL35"/>
</dbReference>
<dbReference type="InterPro" id="IPR021137">
    <property type="entry name" value="Ribosomal_bL35-like"/>
</dbReference>
<dbReference type="InterPro" id="IPR018265">
    <property type="entry name" value="Ribosomal_bL35_CS"/>
</dbReference>
<dbReference type="InterPro" id="IPR037229">
    <property type="entry name" value="Ribosomal_bL35_sf"/>
</dbReference>
<dbReference type="NCBIfam" id="TIGR00001">
    <property type="entry name" value="rpmI_bact"/>
    <property type="match status" value="1"/>
</dbReference>
<dbReference type="PANTHER" id="PTHR33343">
    <property type="entry name" value="54S RIBOSOMAL PROTEIN BL35M"/>
    <property type="match status" value="1"/>
</dbReference>
<dbReference type="PANTHER" id="PTHR33343:SF1">
    <property type="entry name" value="LARGE RIBOSOMAL SUBUNIT PROTEIN BL35M"/>
    <property type="match status" value="1"/>
</dbReference>
<dbReference type="Pfam" id="PF01632">
    <property type="entry name" value="Ribosomal_L35p"/>
    <property type="match status" value="1"/>
</dbReference>
<dbReference type="PRINTS" id="PR00064">
    <property type="entry name" value="RIBOSOMALL35"/>
</dbReference>
<dbReference type="SUPFAM" id="SSF143034">
    <property type="entry name" value="L35p-like"/>
    <property type="match status" value="1"/>
</dbReference>
<dbReference type="PROSITE" id="PS00936">
    <property type="entry name" value="RIBOSOMAL_L35"/>
    <property type="match status" value="1"/>
</dbReference>
<accession>P75447</accession>
<gene>
    <name type="primary">rpmI</name>
    <name type="ordered locus">MPN_116</name>
    <name type="ORF">MP038</name>
</gene>